<sequence length="690" mass="76115">MPVPTPLSEGTTPDTAAQELRTNRLWEALPGLSYGGDYIPNSGRNRSARKIYRSCRKPECRPSALASSPGLGLEPVEGSYDFTWLDEVMDNLAATGIKVALATATAAPPAGWLRKHPEILPVTAEGSTLGPARAHYLVVGMVLFCRPVCGEDDPRLGERYKDHPALALWHVDNELGCHVSEFYGPRRHRRFPSMAEPTLRHDRGPQRGLGTAFWSQRYSCFEEILTPRPAPTTLNPTQQLDFQRFSSWGLIDFYSMLARGHFARSHPRCPPRQIWWPQAPPCLWDYFDWAKKLECHRQWSLPGGRRYRCVTSELAFRRRSDSEAIAGGKPWSPDGALSPCRPCNWLASQHDSRTPGEMARNSLVHVGRGIWMLSCFSSGDRASRVRRNSTRPWCRTPEPTREYGVKLLSWAQAQSLVRGSRRRGGITHRNRLRLRTLVGKRTGLHPAPMWKYLELLRAFHAPCSCPASPPIWSIPALTLTAMTWWSSRPCTPSPMPRPAILRQRQNAEPQCSSATSVDIDENDAVRLGGYPGAFRDLLGVNVEEFHPLPENSTVSLDAGWSGRIWSEHVHLTGAEAKVSFTEAPLTGVPAVTRHAVGTGAAWYLATFPDATGLESLLDSLIAESGVRAPAMAAAGVELSRRSHADGRSYLFAINHNVTEAAVSAQGTELISGTPFNGTVPAGAVAVIAEG</sequence>
<name>BGAL1_ARTSP</name>
<reference evidence="5 6" key="1">
    <citation type="journal article" date="1995" name="J. Bacteriol.">
        <title>Analysis of a novel gene and beta-galactosidase isozyme from a psychrotrophic Arthrobacter isolate.</title>
        <authorList>
            <person name="Gutshall K.R."/>
            <person name="Trimbur D.E."/>
            <person name="Kasmir J.J."/>
            <person name="Brenchley J.E."/>
        </authorList>
    </citation>
    <scope>NUCLEOTIDE SEQUENCE [GENOMIC DNA]</scope>
    <scope>PROTEIN SEQUENCE OF 9-16</scope>
    <scope>FUNCTION</scope>
    <scope>CATALYTIC ACTIVITY</scope>
    <scope>ACTIVITY REGULATION</scope>
    <scope>BIOPHYSICOCHEMICAL PROPERTIES</scope>
    <scope>SUBSTRATE SPECIFICITY</scope>
    <source>
        <strain evidence="4">B7</strain>
    </source>
</reference>
<keyword id="KW-0903">Direct protein sequencing</keyword>
<keyword id="KW-0326">Glycosidase</keyword>
<keyword id="KW-0378">Hydrolase</keyword>
<dbReference type="EC" id="3.2.1.23"/>
<dbReference type="EMBL" id="U17417">
    <property type="protein sequence ID" value="AAA75601.1"/>
    <property type="status" value="ALT_FRAME"/>
    <property type="molecule type" value="Genomic_DNA"/>
</dbReference>
<dbReference type="SMR" id="Q44233"/>
<dbReference type="CAZy" id="GH42">
    <property type="family name" value="Glycoside Hydrolase Family 42"/>
</dbReference>
<dbReference type="GO" id="GO:0009341">
    <property type="term" value="C:beta-galactosidase complex"/>
    <property type="evidence" value="ECO:0007669"/>
    <property type="project" value="InterPro"/>
</dbReference>
<dbReference type="GO" id="GO:0004565">
    <property type="term" value="F:beta-galactosidase activity"/>
    <property type="evidence" value="ECO:0007669"/>
    <property type="project" value="UniProtKB-EC"/>
</dbReference>
<dbReference type="GO" id="GO:0006012">
    <property type="term" value="P:galactose metabolic process"/>
    <property type="evidence" value="ECO:0007669"/>
    <property type="project" value="InterPro"/>
</dbReference>
<dbReference type="CDD" id="cd03143">
    <property type="entry name" value="A4_beta-galactosidase_middle_domain"/>
    <property type="match status" value="1"/>
</dbReference>
<dbReference type="Gene3D" id="3.40.50.880">
    <property type="match status" value="1"/>
</dbReference>
<dbReference type="Gene3D" id="3.20.20.80">
    <property type="entry name" value="Glycosidases"/>
    <property type="match status" value="1"/>
</dbReference>
<dbReference type="Gene3D" id="2.60.40.1180">
    <property type="entry name" value="Golgi alpha-mannosidase II"/>
    <property type="match status" value="1"/>
</dbReference>
<dbReference type="InterPro" id="IPR013739">
    <property type="entry name" value="Beta_galactosidase_C"/>
</dbReference>
<dbReference type="InterPro" id="IPR013738">
    <property type="entry name" value="Beta_galactosidase_Trimer"/>
</dbReference>
<dbReference type="InterPro" id="IPR029062">
    <property type="entry name" value="Class_I_gatase-like"/>
</dbReference>
<dbReference type="InterPro" id="IPR003476">
    <property type="entry name" value="Glyco_hydro_42"/>
</dbReference>
<dbReference type="InterPro" id="IPR013529">
    <property type="entry name" value="Glyco_hydro_42_N"/>
</dbReference>
<dbReference type="InterPro" id="IPR013780">
    <property type="entry name" value="Glyco_hydro_b"/>
</dbReference>
<dbReference type="InterPro" id="IPR017853">
    <property type="entry name" value="Glycoside_hydrolase_SF"/>
</dbReference>
<dbReference type="PANTHER" id="PTHR36447">
    <property type="entry name" value="BETA-GALACTOSIDASE GANA"/>
    <property type="match status" value="1"/>
</dbReference>
<dbReference type="PANTHER" id="PTHR36447:SF1">
    <property type="entry name" value="BETA-GALACTOSIDASE GANA"/>
    <property type="match status" value="1"/>
</dbReference>
<dbReference type="Pfam" id="PF02449">
    <property type="entry name" value="Glyco_hydro_42"/>
    <property type="match status" value="1"/>
</dbReference>
<dbReference type="Pfam" id="PF08533">
    <property type="entry name" value="Glyco_hydro_42C"/>
    <property type="match status" value="1"/>
</dbReference>
<dbReference type="Pfam" id="PF08532">
    <property type="entry name" value="Glyco_hydro_42M"/>
    <property type="match status" value="1"/>
</dbReference>
<dbReference type="PIRSF" id="PIRSF001084">
    <property type="entry name" value="B-galactosidase"/>
    <property type="match status" value="1"/>
</dbReference>
<dbReference type="SUPFAM" id="SSF51445">
    <property type="entry name" value="(Trans)glycosidases"/>
    <property type="match status" value="1"/>
</dbReference>
<dbReference type="SUPFAM" id="SSF52317">
    <property type="entry name" value="Class I glutamine amidotransferase-like"/>
    <property type="match status" value="1"/>
</dbReference>
<proteinExistence type="evidence at protein level"/>
<organism>
    <name type="scientific">Arthrobacter sp</name>
    <dbReference type="NCBI Taxonomy" id="1667"/>
    <lineage>
        <taxon>Bacteria</taxon>
        <taxon>Bacillati</taxon>
        <taxon>Actinomycetota</taxon>
        <taxon>Actinomycetes</taxon>
        <taxon>Micrococcales</taxon>
        <taxon>Micrococcaceae</taxon>
        <taxon>Arthrobacter</taxon>
    </lineage>
</organism>
<evidence type="ECO:0000250" key="1">
    <source>
        <dbReference type="UniProtKB" id="O69315"/>
    </source>
</evidence>
<evidence type="ECO:0000250" key="2">
    <source>
        <dbReference type="UniProtKB" id="P19668"/>
    </source>
</evidence>
<evidence type="ECO:0000255" key="3"/>
<evidence type="ECO:0000269" key="4">
    <source>
    </source>
</evidence>
<evidence type="ECO:0000305" key="5"/>
<evidence type="ECO:0000312" key="6">
    <source>
        <dbReference type="EMBL" id="AAA75601.1"/>
    </source>
</evidence>
<accession>Q44233</accession>
<protein>
    <recommendedName>
        <fullName>Beta-galactosidase</fullName>
        <shortName evidence="2">Beta-gal</shortName>
        <ecNumber>3.2.1.23</ecNumber>
    </recommendedName>
</protein>
<comment type="function">
    <text evidence="4">Highly specific towards beta-D-galactoside substrates. Hydrolyzes 5-bromo-4-chloro-3-indolyl-beta-D-galactopyranoside (X-Gal) and o-nitrophenyl-beta-D-galactopyranoside (ONPG). Has activity against p-nitrophenyl(pNP)-beta-D-galactoside, but not significantly at all towards pNP-alpha-D-galactoside, pNP-beta-D-glucoside, pNP-beta-D-mannoside, pNP-beta-L-fucoside, pNP-beta-D-xyloside, pNP-beta-L-arabinoside, pNP-beta-D-galuronide, pNP-beta-D-glucuronide, pNP-beta-D-lactoside or pNP-beta-D-cellobioside.</text>
</comment>
<comment type="catalytic activity">
    <reaction evidence="4">
        <text>Hydrolysis of terminal non-reducing beta-D-galactose residues in beta-D-galactosides.</text>
        <dbReference type="EC" id="3.2.1.23"/>
    </reaction>
</comment>
<comment type="activity regulation">
    <text evidence="4">Activity stimulated by beta-mercaptoethanol.</text>
</comment>
<comment type="biophysicochemical properties">
    <kinetics>
        <KM evidence="4">0.57 mM for ONPG</KM>
        <KM evidence="4">4.81 mM for lactose</KM>
        <Vmax evidence="4">254.0 umol/min/mg enzyme with ONPG as substrate</Vmax>
        <Vmax evidence="4">3.97 umol/min/mg enzyme with lactose as substrate</Vmax>
    </kinetics>
    <phDependence>
        <text evidence="4">Optimum pH is 6.6. Maintains activity over a broad range of pH values from 6 to 9.</text>
    </phDependence>
    <temperatureDependence>
        <text evidence="4">Optimum temperature is 45-50 degrees Celsius. Activity declines rapidly above 50 degrees Celsius. Stable for at least 70 hours at temperatures 35 degrees Celsius and below. At 50 degrees Celsius loses all activity in less than 15 minutes.</text>
    </temperatureDependence>
</comment>
<comment type="similarity">
    <text evidence="3">Belongs to the glycosyl hydrolase 42 family.</text>
</comment>
<comment type="sequence caution" evidence="5">
    <conflict type="frameshift">
        <sequence resource="EMBL-CDS" id="AAA75601"/>
    </conflict>
</comment>
<feature type="chain" id="PRO_0000407680" description="Beta-galactosidase">
    <location>
        <begin position="1"/>
        <end position="690"/>
    </location>
</feature>
<feature type="active site" description="Proton donor" evidence="1">
    <location>
        <position position="174"/>
    </location>
</feature>
<feature type="binding site" evidence="1">
    <location>
        <position position="173"/>
    </location>
    <ligand>
        <name>substrate</name>
    </ligand>
</feature>
<feature type="binding site" evidence="1">
    <location>
        <position position="345"/>
    </location>
    <ligand>
        <name>substrate</name>
    </ligand>
</feature>